<protein>
    <recommendedName>
        <fullName evidence="4">Ent-kaurene synthase-like 1</fullName>
        <shortName evidence="4">RcKS1</shortName>
        <shortName evidence="4">RcKSL1</shortName>
        <ecNumber evidence="2">4.2.3.19</ecNumber>
    </recommendedName>
</protein>
<keyword id="KW-0456">Lyase</keyword>
<keyword id="KW-0460">Magnesium</keyword>
<keyword id="KW-0479">Metal-binding</keyword>
<keyword id="KW-1185">Reference proteome</keyword>
<organism>
    <name type="scientific">Ricinus communis</name>
    <name type="common">Castor bean</name>
    <dbReference type="NCBI Taxonomy" id="3988"/>
    <lineage>
        <taxon>Eukaryota</taxon>
        <taxon>Viridiplantae</taxon>
        <taxon>Streptophyta</taxon>
        <taxon>Embryophyta</taxon>
        <taxon>Tracheophyta</taxon>
        <taxon>Spermatophyta</taxon>
        <taxon>Magnoliopsida</taxon>
        <taxon>eudicotyledons</taxon>
        <taxon>Gunneridae</taxon>
        <taxon>Pentapetalae</taxon>
        <taxon>rosids</taxon>
        <taxon>fabids</taxon>
        <taxon>Malpighiales</taxon>
        <taxon>Euphorbiaceae</taxon>
        <taxon>Acalyphoideae</taxon>
        <taxon>Acalypheae</taxon>
        <taxon>Ricinus</taxon>
    </lineage>
</organism>
<reference key="1">
    <citation type="journal article" date="2010" name="Nat. Biotechnol.">
        <title>Draft genome sequence of the oilseed species Ricinus communis.</title>
        <authorList>
            <person name="Chan A.P."/>
            <person name="Crabtree J."/>
            <person name="Zhao Q."/>
            <person name="Lorenzi H."/>
            <person name="Orvis J."/>
            <person name="Puiu D."/>
            <person name="Melake-Berhan A."/>
            <person name="Jones K.M."/>
            <person name="Redman J."/>
            <person name="Chen G."/>
            <person name="Cahoon E.B."/>
            <person name="Gedil M."/>
            <person name="Stanke M."/>
            <person name="Haas B.J."/>
            <person name="Wortman J.R."/>
            <person name="Fraser-Liggett C.M."/>
            <person name="Ravel J."/>
            <person name="Rabinowicz P.D."/>
        </authorList>
    </citation>
    <scope>NUCLEOTIDE SEQUENCE [LARGE SCALE GENOMIC DNA]</scope>
    <source>
        <strain>cv. Hale</strain>
    </source>
</reference>
<reference key="2">
    <citation type="journal article" date="2014" name="Phytochemistry">
        <title>Biochemical characterization of the castor bean ent-kaurene synthase(-like) family supports quantum chemical view of diterpene cyclization.</title>
        <authorList>
            <person name="Jackson A.J."/>
            <person name="Hershey D.M."/>
            <person name="Chesnut T."/>
            <person name="Xu M."/>
            <person name="Peters R.J."/>
        </authorList>
    </citation>
    <scope>FUNCTION</scope>
    <scope>CATALYTIC ACTIVITY</scope>
    <scope>PATHWAY</scope>
    <scope>GENE FAMILY</scope>
    <scope>NOMENCLATURE</scope>
</reference>
<dbReference type="EC" id="4.2.3.19" evidence="2"/>
<dbReference type="EMBL" id="EQ974570">
    <property type="protein sequence ID" value="EEF28689.1"/>
    <property type="status" value="ALT_SEQ"/>
    <property type="molecule type" value="Genomic_DNA"/>
</dbReference>
<dbReference type="SMR" id="B9T625"/>
<dbReference type="FunCoup" id="B9T625">
    <property type="interactions" value="230"/>
</dbReference>
<dbReference type="STRING" id="3988.B9T625"/>
<dbReference type="eggNOG" id="ENOG502QVGX">
    <property type="taxonomic scope" value="Eukaryota"/>
</dbReference>
<dbReference type="InParanoid" id="B9T625"/>
<dbReference type="BRENDA" id="4.2.3.19">
    <property type="organism ID" value="1204"/>
</dbReference>
<dbReference type="UniPathway" id="UPA00213"/>
<dbReference type="Proteomes" id="UP000008311">
    <property type="component" value="Unassembled WGS sequence"/>
</dbReference>
<dbReference type="GO" id="GO:0009507">
    <property type="term" value="C:chloroplast"/>
    <property type="evidence" value="ECO:0000318"/>
    <property type="project" value="GO_Central"/>
</dbReference>
<dbReference type="GO" id="GO:0009899">
    <property type="term" value="F:ent-kaurene synthase activity"/>
    <property type="evidence" value="ECO:0007669"/>
    <property type="project" value="UniProtKB-EC"/>
</dbReference>
<dbReference type="GO" id="GO:0000287">
    <property type="term" value="F:magnesium ion binding"/>
    <property type="evidence" value="ECO:0000318"/>
    <property type="project" value="GO_Central"/>
</dbReference>
<dbReference type="GO" id="GO:0010333">
    <property type="term" value="F:terpene synthase activity"/>
    <property type="evidence" value="ECO:0000318"/>
    <property type="project" value="GO_Central"/>
</dbReference>
<dbReference type="GO" id="GO:0009686">
    <property type="term" value="P:gibberellin biosynthetic process"/>
    <property type="evidence" value="ECO:0000318"/>
    <property type="project" value="GO_Central"/>
</dbReference>
<dbReference type="CDD" id="cd00684">
    <property type="entry name" value="Terpene_cyclase_plant_C1"/>
    <property type="match status" value="1"/>
</dbReference>
<dbReference type="FunFam" id="1.50.10.160:FF:000002">
    <property type="entry name" value="cis-abienol synthase, chloroplastic"/>
    <property type="match status" value="1"/>
</dbReference>
<dbReference type="FunFam" id="1.50.10.130:FF:000002">
    <property type="entry name" value="Ent-copalyl diphosphate synthase, chloroplastic"/>
    <property type="match status" value="1"/>
</dbReference>
<dbReference type="FunFam" id="1.10.600.10:FF:000005">
    <property type="entry name" value="Ent-kaur-16-ene synthase, chloroplastic"/>
    <property type="match status" value="1"/>
</dbReference>
<dbReference type="Gene3D" id="1.50.10.160">
    <property type="match status" value="1"/>
</dbReference>
<dbReference type="Gene3D" id="1.10.600.10">
    <property type="entry name" value="Farnesyl Diphosphate Synthase"/>
    <property type="match status" value="1"/>
</dbReference>
<dbReference type="Gene3D" id="1.50.10.130">
    <property type="entry name" value="Terpene synthase, N-terminal domain"/>
    <property type="match status" value="1"/>
</dbReference>
<dbReference type="InterPro" id="IPR008949">
    <property type="entry name" value="Isoprenoid_synthase_dom_sf"/>
</dbReference>
<dbReference type="InterPro" id="IPR044814">
    <property type="entry name" value="Terpene_cyclase_plant_C1"/>
</dbReference>
<dbReference type="InterPro" id="IPR001906">
    <property type="entry name" value="Terpene_synth_N"/>
</dbReference>
<dbReference type="InterPro" id="IPR036965">
    <property type="entry name" value="Terpene_synth_N_sf"/>
</dbReference>
<dbReference type="InterPro" id="IPR050148">
    <property type="entry name" value="Terpene_synthase-like"/>
</dbReference>
<dbReference type="InterPro" id="IPR005630">
    <property type="entry name" value="Terpene_synthase_metal-bd"/>
</dbReference>
<dbReference type="InterPro" id="IPR008930">
    <property type="entry name" value="Terpenoid_cyclase/PrenylTrfase"/>
</dbReference>
<dbReference type="PANTHER" id="PTHR31739">
    <property type="entry name" value="ENT-COPALYL DIPHOSPHATE SYNTHASE, CHLOROPLASTIC"/>
    <property type="match status" value="1"/>
</dbReference>
<dbReference type="PANTHER" id="PTHR31739:SF3">
    <property type="entry name" value="ENT-KAUR-16-ENE SYNTHASE, CHLOROPLASTIC"/>
    <property type="match status" value="1"/>
</dbReference>
<dbReference type="Pfam" id="PF01397">
    <property type="entry name" value="Terpene_synth"/>
    <property type="match status" value="1"/>
</dbReference>
<dbReference type="Pfam" id="PF03936">
    <property type="entry name" value="Terpene_synth_C"/>
    <property type="match status" value="1"/>
</dbReference>
<dbReference type="SFLD" id="SFLDG01014">
    <property type="entry name" value="Terpene_Cyclase_Like_1_N-term"/>
    <property type="match status" value="1"/>
</dbReference>
<dbReference type="SUPFAM" id="SSF48239">
    <property type="entry name" value="Terpenoid cyclases/Protein prenyltransferases"/>
    <property type="match status" value="2"/>
</dbReference>
<dbReference type="SUPFAM" id="SSF48576">
    <property type="entry name" value="Terpenoid synthases"/>
    <property type="match status" value="1"/>
</dbReference>
<sequence>MFDKIELSVSPYDTAWVAMIPSLNSVQAPFFPECTKWIVDNQLSDGSWGLPHHHPLLIKDTLSSTLACVLALKKWGVGETLVNKGLQFIELNSTSLNDEKQHTPIGFDIIFPAMLEHAKELALNLPLKSDVIDAMLHRRDVDLKSGSGGSNTEGRKAYLAYIAEGIGKFQDWEMVMKYQRKNGSLFNSPSTTAAAFSHLRNADCLQYLQSVLQKYGNAVPTIYPLDVYSRLLMVDILERLGIDRHFRKEIKLVLEETYRYWLQGNEEIFLDCITCAMAFRILRVNGYDVSSDVFTQFTEDHFFDSLGGYLKDTRTVLELYRASQILYPDEPLLEKQNSWTNHFLEKCLSSGSSYADGPRECITEVVHNALNCPYYADLERLTNRRSIENYNVDETRILKASYRCLNTGNQHFLKLAVEDFNLCQLIHQEELQQLGRWVVEKRLNKLKFARQKLGYCYFSAAATLFAPELSDARLSWAKNGVLTTVVDDFFDVGGSVEELINLIQLIEKWDVDESTHFCSEQVEIIFSALRSTISEIGDKAFTWQGRKVTSHVIKIWLDLLKSMLTETLWTKSKSIPTLDEYMINGYVSFALGPIVLPALFLVGPKLTEEDVRDPELHDLFKAMGTCGRLLNDWRGFQRESKEGKLNAVSLHMIQGNGGVNEEEAIRKIKGLINSQRSELLRLVLREKNSNIPRACKDLFWKMIKVLHLFYLKDDGFTSNEMISTANAVITEPVAFHGP</sequence>
<feature type="chain" id="PRO_0000460910" description="Ent-kaurene synthase-like 1">
    <location>
        <begin position="1"/>
        <end position="738"/>
    </location>
</feature>
<feature type="short sequence motif" description="DDXXD motif" evidence="1">
    <location>
        <begin position="487"/>
        <end position="491"/>
    </location>
</feature>
<feature type="binding site" evidence="1">
    <location>
        <position position="487"/>
    </location>
    <ligand>
        <name>Mg(2+)</name>
        <dbReference type="ChEBI" id="CHEBI:18420"/>
        <label>1</label>
    </ligand>
</feature>
<feature type="binding site" evidence="1">
    <location>
        <position position="487"/>
    </location>
    <ligand>
        <name>Mg(2+)</name>
        <dbReference type="ChEBI" id="CHEBI:18420"/>
        <label>2</label>
    </ligand>
</feature>
<feature type="binding site" evidence="1">
    <location>
        <position position="491"/>
    </location>
    <ligand>
        <name>Mg(2+)</name>
        <dbReference type="ChEBI" id="CHEBI:18420"/>
        <label>1</label>
    </ligand>
</feature>
<feature type="binding site" evidence="1">
    <location>
        <position position="491"/>
    </location>
    <ligand>
        <name>Mg(2+)</name>
        <dbReference type="ChEBI" id="CHEBI:18420"/>
        <label>2</label>
    </ligand>
</feature>
<feature type="binding site" evidence="1">
    <location>
        <position position="631"/>
    </location>
    <ligand>
        <name>Mg(2+)</name>
        <dbReference type="ChEBI" id="CHEBI:18420"/>
        <label>3</label>
    </ligand>
</feature>
<feature type="binding site" evidence="1">
    <location>
        <position position="632"/>
    </location>
    <ligand>
        <name>Mg(2+)</name>
        <dbReference type="ChEBI" id="CHEBI:18420"/>
        <label>3</label>
    </ligand>
</feature>
<feature type="binding site" evidence="1">
    <location>
        <position position="639"/>
    </location>
    <ligand>
        <name>Mg(2+)</name>
        <dbReference type="ChEBI" id="CHEBI:18420"/>
        <label>3</label>
    </ligand>
</feature>
<comment type="function">
    <text evidence="3">Diterpene cyclase involved in the biosynthesis of labdane-related diterpenoids (LRDs) natural products (PubMed:24810014). Catalyzes the cyclization of ent-CDP into ent-kaurene (PubMed:24810014).</text>
</comment>
<comment type="catalytic activity">
    <reaction evidence="3">
        <text>ent-copalyl diphosphate = ent-kaur-16-ene + diphosphate</text>
        <dbReference type="Rhea" id="RHEA:22220"/>
        <dbReference type="ChEBI" id="CHEBI:15415"/>
        <dbReference type="ChEBI" id="CHEBI:33019"/>
        <dbReference type="ChEBI" id="CHEBI:58553"/>
        <dbReference type="EC" id="4.2.3.19"/>
    </reaction>
    <physiologicalReaction direction="left-to-right" evidence="3">
        <dbReference type="Rhea" id="RHEA:22221"/>
    </physiologicalReaction>
</comment>
<comment type="cofactor">
    <cofactor evidence="1">
        <name>Mg(2+)</name>
        <dbReference type="ChEBI" id="CHEBI:18420"/>
    </cofactor>
    <text evidence="1">Binds 3 Mg(2+) ions per subunit.</text>
</comment>
<comment type="pathway">
    <text evidence="3">Secondary metabolite biosynthesis; terpenoid biosynthesis.</text>
</comment>
<comment type="domain">
    <text evidence="1">The Asp-Asp-Xaa-Xaa-Asp/Glu (DDXXD/E) motif is important for the catalytic activity, presumably through binding to Mg(2+).</text>
</comment>
<comment type="similarity">
    <text evidence="5">Belongs to the terpene synthase family.</text>
</comment>
<comment type="sequence caution" evidence="5">
    <conflict type="erroneous gene model prediction">
        <sequence resource="EMBL-CDS" id="EEF28689"/>
    </conflict>
</comment>
<evidence type="ECO:0000250" key="1">
    <source>
        <dbReference type="UniProtKB" id="Q40577"/>
    </source>
</evidence>
<evidence type="ECO:0000269" key="2">
    <source>
    </source>
</evidence>
<evidence type="ECO:0000269" key="3">
    <source>
    </source>
</evidence>
<evidence type="ECO:0000303" key="4">
    <source>
    </source>
</evidence>
<evidence type="ECO:0000305" key="5"/>
<evidence type="ECO:0000312" key="6">
    <source>
        <dbReference type="EMBL" id="EEF28689.1"/>
    </source>
</evidence>
<gene>
    <name evidence="4" type="primary">KS1</name>
    <name evidence="4" type="synonym">KSL1</name>
    <name evidence="6" type="ORF">RCOM_0306870</name>
</gene>
<proteinExistence type="evidence at protein level"/>
<name>KSL1_RICCO</name>
<accession>B9T625</accession>